<protein>
    <recommendedName>
        <fullName evidence="1">Protein translocase subunit SecA</fullName>
        <ecNumber evidence="1">7.4.2.8</ecNumber>
    </recommendedName>
</protein>
<accession>Q0P9V7</accession>
<evidence type="ECO:0000255" key="1">
    <source>
        <dbReference type="HAMAP-Rule" id="MF_01382"/>
    </source>
</evidence>
<dbReference type="EC" id="7.4.2.8" evidence="1"/>
<dbReference type="EMBL" id="AL111168">
    <property type="protein sequence ID" value="CAL35062.1"/>
    <property type="molecule type" value="Genomic_DNA"/>
</dbReference>
<dbReference type="PIR" id="E81368">
    <property type="entry name" value="E81368"/>
</dbReference>
<dbReference type="RefSeq" id="WP_002858134.1">
    <property type="nucleotide sequence ID" value="NZ_SZUC01000001.1"/>
</dbReference>
<dbReference type="RefSeq" id="YP_002344340.1">
    <property type="nucleotide sequence ID" value="NC_002163.1"/>
</dbReference>
<dbReference type="SMR" id="Q0P9V7"/>
<dbReference type="STRING" id="192222.Cj0942c"/>
<dbReference type="PaxDb" id="192222-Cj0942c"/>
<dbReference type="EnsemblBacteria" id="CAL35062">
    <property type="protein sequence ID" value="CAL35062"/>
    <property type="gene ID" value="Cj0942c"/>
</dbReference>
<dbReference type="GeneID" id="905172"/>
<dbReference type="KEGG" id="cje:Cj0942c"/>
<dbReference type="PATRIC" id="fig|192222.6.peg.926"/>
<dbReference type="eggNOG" id="COG0653">
    <property type="taxonomic scope" value="Bacteria"/>
</dbReference>
<dbReference type="HOGENOM" id="CLU_005314_3_0_7"/>
<dbReference type="OrthoDB" id="9805579at2"/>
<dbReference type="Proteomes" id="UP000000799">
    <property type="component" value="Chromosome"/>
</dbReference>
<dbReference type="GO" id="GO:0031522">
    <property type="term" value="C:cell envelope Sec protein transport complex"/>
    <property type="evidence" value="ECO:0007669"/>
    <property type="project" value="TreeGrafter"/>
</dbReference>
<dbReference type="GO" id="GO:0005829">
    <property type="term" value="C:cytosol"/>
    <property type="evidence" value="ECO:0007669"/>
    <property type="project" value="TreeGrafter"/>
</dbReference>
<dbReference type="GO" id="GO:0005886">
    <property type="term" value="C:plasma membrane"/>
    <property type="evidence" value="ECO:0007669"/>
    <property type="project" value="UniProtKB-SubCell"/>
</dbReference>
<dbReference type="GO" id="GO:0005524">
    <property type="term" value="F:ATP binding"/>
    <property type="evidence" value="ECO:0007669"/>
    <property type="project" value="UniProtKB-UniRule"/>
</dbReference>
<dbReference type="GO" id="GO:0046872">
    <property type="term" value="F:metal ion binding"/>
    <property type="evidence" value="ECO:0007669"/>
    <property type="project" value="UniProtKB-KW"/>
</dbReference>
<dbReference type="GO" id="GO:0008564">
    <property type="term" value="F:protein-exporting ATPase activity"/>
    <property type="evidence" value="ECO:0007669"/>
    <property type="project" value="UniProtKB-EC"/>
</dbReference>
<dbReference type="GO" id="GO:0065002">
    <property type="term" value="P:intracellular protein transmembrane transport"/>
    <property type="evidence" value="ECO:0007669"/>
    <property type="project" value="UniProtKB-UniRule"/>
</dbReference>
<dbReference type="GO" id="GO:0017038">
    <property type="term" value="P:protein import"/>
    <property type="evidence" value="ECO:0007669"/>
    <property type="project" value="InterPro"/>
</dbReference>
<dbReference type="GO" id="GO:0006605">
    <property type="term" value="P:protein targeting"/>
    <property type="evidence" value="ECO:0007669"/>
    <property type="project" value="UniProtKB-UniRule"/>
</dbReference>
<dbReference type="GO" id="GO:0043952">
    <property type="term" value="P:protein transport by the Sec complex"/>
    <property type="evidence" value="ECO:0007669"/>
    <property type="project" value="TreeGrafter"/>
</dbReference>
<dbReference type="CDD" id="cd17928">
    <property type="entry name" value="DEXDc_SecA"/>
    <property type="match status" value="1"/>
</dbReference>
<dbReference type="CDD" id="cd18803">
    <property type="entry name" value="SF2_C_secA"/>
    <property type="match status" value="1"/>
</dbReference>
<dbReference type="FunFam" id="3.40.50.300:FF:000429">
    <property type="entry name" value="Preprotein translocase subunit SecA"/>
    <property type="match status" value="1"/>
</dbReference>
<dbReference type="FunFam" id="3.90.1440.10:FF:000001">
    <property type="entry name" value="Preprotein translocase subunit SecA"/>
    <property type="match status" value="1"/>
</dbReference>
<dbReference type="Gene3D" id="1.10.3060.10">
    <property type="entry name" value="Helical scaffold and wing domains of SecA"/>
    <property type="match status" value="1"/>
</dbReference>
<dbReference type="Gene3D" id="3.40.50.300">
    <property type="entry name" value="P-loop containing nucleotide triphosphate hydrolases"/>
    <property type="match status" value="3"/>
</dbReference>
<dbReference type="Gene3D" id="3.90.1440.10">
    <property type="entry name" value="SecA, preprotein cross-linking domain"/>
    <property type="match status" value="1"/>
</dbReference>
<dbReference type="HAMAP" id="MF_01382">
    <property type="entry name" value="SecA"/>
    <property type="match status" value="1"/>
</dbReference>
<dbReference type="InterPro" id="IPR014001">
    <property type="entry name" value="Helicase_ATP-bd"/>
</dbReference>
<dbReference type="InterPro" id="IPR001650">
    <property type="entry name" value="Helicase_C-like"/>
</dbReference>
<dbReference type="InterPro" id="IPR027417">
    <property type="entry name" value="P-loop_NTPase"/>
</dbReference>
<dbReference type="InterPro" id="IPR004027">
    <property type="entry name" value="SEC_C_motif"/>
</dbReference>
<dbReference type="InterPro" id="IPR000185">
    <property type="entry name" value="SecA"/>
</dbReference>
<dbReference type="InterPro" id="IPR011115">
    <property type="entry name" value="SecA_DEAD"/>
</dbReference>
<dbReference type="InterPro" id="IPR014018">
    <property type="entry name" value="SecA_motor_DEAD"/>
</dbReference>
<dbReference type="InterPro" id="IPR011130">
    <property type="entry name" value="SecA_preprotein_X-link_dom"/>
</dbReference>
<dbReference type="InterPro" id="IPR044722">
    <property type="entry name" value="SecA_SF2_C"/>
</dbReference>
<dbReference type="InterPro" id="IPR011116">
    <property type="entry name" value="SecA_Wing/Scaffold"/>
</dbReference>
<dbReference type="InterPro" id="IPR036266">
    <property type="entry name" value="SecA_Wing/Scaffold_sf"/>
</dbReference>
<dbReference type="InterPro" id="IPR036670">
    <property type="entry name" value="SecA_X-link_sf"/>
</dbReference>
<dbReference type="NCBIfam" id="NF006630">
    <property type="entry name" value="PRK09200.1"/>
    <property type="match status" value="1"/>
</dbReference>
<dbReference type="NCBIfam" id="NF009538">
    <property type="entry name" value="PRK12904.1"/>
    <property type="match status" value="1"/>
</dbReference>
<dbReference type="NCBIfam" id="TIGR00963">
    <property type="entry name" value="secA"/>
    <property type="match status" value="1"/>
</dbReference>
<dbReference type="PANTHER" id="PTHR30612:SF0">
    <property type="entry name" value="CHLOROPLAST PROTEIN-TRANSPORTING ATPASE"/>
    <property type="match status" value="1"/>
</dbReference>
<dbReference type="PANTHER" id="PTHR30612">
    <property type="entry name" value="SECA INNER MEMBRANE COMPONENT OF SEC PROTEIN SECRETION SYSTEM"/>
    <property type="match status" value="1"/>
</dbReference>
<dbReference type="Pfam" id="PF21090">
    <property type="entry name" value="P-loop_SecA"/>
    <property type="match status" value="1"/>
</dbReference>
<dbReference type="Pfam" id="PF02810">
    <property type="entry name" value="SEC-C"/>
    <property type="match status" value="1"/>
</dbReference>
<dbReference type="Pfam" id="PF07517">
    <property type="entry name" value="SecA_DEAD"/>
    <property type="match status" value="1"/>
</dbReference>
<dbReference type="Pfam" id="PF01043">
    <property type="entry name" value="SecA_PP_bind"/>
    <property type="match status" value="1"/>
</dbReference>
<dbReference type="Pfam" id="PF07516">
    <property type="entry name" value="SecA_SW"/>
    <property type="match status" value="1"/>
</dbReference>
<dbReference type="PRINTS" id="PR00906">
    <property type="entry name" value="SECA"/>
</dbReference>
<dbReference type="SMART" id="SM00957">
    <property type="entry name" value="SecA_DEAD"/>
    <property type="match status" value="1"/>
</dbReference>
<dbReference type="SMART" id="SM00958">
    <property type="entry name" value="SecA_PP_bind"/>
    <property type="match status" value="1"/>
</dbReference>
<dbReference type="SUPFAM" id="SSF81886">
    <property type="entry name" value="Helical scaffold and wing domains of SecA"/>
    <property type="match status" value="1"/>
</dbReference>
<dbReference type="SUPFAM" id="SSF52540">
    <property type="entry name" value="P-loop containing nucleoside triphosphate hydrolases"/>
    <property type="match status" value="2"/>
</dbReference>
<dbReference type="SUPFAM" id="SSF81767">
    <property type="entry name" value="Pre-protein crosslinking domain of SecA"/>
    <property type="match status" value="1"/>
</dbReference>
<dbReference type="PROSITE" id="PS51196">
    <property type="entry name" value="SECA_MOTOR_DEAD"/>
    <property type="match status" value="1"/>
</dbReference>
<gene>
    <name evidence="1" type="primary">secA</name>
    <name type="ordered locus">Cj0942c</name>
</gene>
<proteinExistence type="inferred from homology"/>
<feature type="chain" id="PRO_0000320765" description="Protein translocase subunit SecA">
    <location>
        <begin position="1"/>
        <end position="862"/>
    </location>
</feature>
<feature type="binding site" evidence="1">
    <location>
        <position position="88"/>
    </location>
    <ligand>
        <name>ATP</name>
        <dbReference type="ChEBI" id="CHEBI:30616"/>
    </ligand>
</feature>
<feature type="binding site" evidence="1">
    <location>
        <begin position="106"/>
        <end position="110"/>
    </location>
    <ligand>
        <name>ATP</name>
        <dbReference type="ChEBI" id="CHEBI:30616"/>
    </ligand>
</feature>
<feature type="binding site" evidence="1">
    <location>
        <position position="506"/>
    </location>
    <ligand>
        <name>ATP</name>
        <dbReference type="ChEBI" id="CHEBI:30616"/>
    </ligand>
</feature>
<feature type="binding site" evidence="1">
    <location>
        <position position="839"/>
    </location>
    <ligand>
        <name>Zn(2+)</name>
        <dbReference type="ChEBI" id="CHEBI:29105"/>
    </ligand>
</feature>
<feature type="binding site" evidence="1">
    <location>
        <position position="841"/>
    </location>
    <ligand>
        <name>Zn(2+)</name>
        <dbReference type="ChEBI" id="CHEBI:29105"/>
    </ligand>
</feature>
<feature type="binding site" evidence="1">
    <location>
        <position position="850"/>
    </location>
    <ligand>
        <name>Zn(2+)</name>
        <dbReference type="ChEBI" id="CHEBI:29105"/>
    </ligand>
</feature>
<feature type="binding site" evidence="1">
    <location>
        <position position="851"/>
    </location>
    <ligand>
        <name>Zn(2+)</name>
        <dbReference type="ChEBI" id="CHEBI:29105"/>
    </ligand>
</feature>
<keyword id="KW-0067">ATP-binding</keyword>
<keyword id="KW-0997">Cell inner membrane</keyword>
<keyword id="KW-1003">Cell membrane</keyword>
<keyword id="KW-0963">Cytoplasm</keyword>
<keyword id="KW-0472">Membrane</keyword>
<keyword id="KW-0479">Metal-binding</keyword>
<keyword id="KW-0547">Nucleotide-binding</keyword>
<keyword id="KW-0653">Protein transport</keyword>
<keyword id="KW-1185">Reference proteome</keyword>
<keyword id="KW-1278">Translocase</keyword>
<keyword id="KW-0811">Translocation</keyword>
<keyword id="KW-0813">Transport</keyword>
<keyword id="KW-0862">Zinc</keyword>
<sequence>MFLNALKAVFGTKNDREVKKYFKRVAQINALEGNYQNLSDDELKAEFAKFKEQILSGEKNENDVLNDVFAIVRETGKRTLNMRHFDVQLIGGMVLHDGKIAEMKTGEGKTLVATLPVVLNAMSGKGVHVVTVNDYLAKRDAEQMSAIYNFLGFSVGVVLSSQNSDIEHKQAYDCDITYGTNNEFGFDYLRDNMKFSKAEKVQREHNFVIVDEVDSILIDEARTPLIISGPTNRTLDGYIKANEVAKQMQKGEAVLPPAKPEGDFVVDEKNRNILITEAGIAKAEKLFGVENLYSLDNAILAHQLDQALKAHNLFEKDVHYVLRNNEVIIVDEFTGRLSEGRRFSEGLHQALEAKENVKIQEESQTLADITFQNYFRMYNKLAGMTGTAQTEATEFSQIYSLDVISIPTNIPIKRQDKDDLIYKTQNEKFKAVIEEIKKANAKGQPVLVGTASIERSEVFHNMLVKEKIPHHVLNAKNHEQEALIIQDAGKKGAVTIATNMAGRGVDIKIDDEIRALGGLYIIGTERHESRRIDNQLRGRAGRQGDPGISRFYLSLEDNLLRIFGGDRIKSIMDRLGIEEGESIESRIVTRAVENAQKKVESLHFESRKHLLEYDDVANEQRKTIYRYRNELLDENYDIRAKISQNIAEYSANVMNDYMLDESGSNVNFENLKAKILYECSTQISEKDFENLSVIEMQDKLSQILENSYNEKMLRLEIKELRNIERILYLQVLDNAWREHLYQMDILKTGIGLRGYNQKDPLVEYKKESYNLFLELVNRIKFDSIKLLFSVQFNQEEAQNLENKANEENEKLLQSSVEMGASEDNLGEAEFKKVPRNAPCPCGSGKKFKECHGKSGPKQGILA</sequence>
<name>SECA_CAMJE</name>
<organism>
    <name type="scientific">Campylobacter jejuni subsp. jejuni serotype O:2 (strain ATCC 700819 / NCTC 11168)</name>
    <dbReference type="NCBI Taxonomy" id="192222"/>
    <lineage>
        <taxon>Bacteria</taxon>
        <taxon>Pseudomonadati</taxon>
        <taxon>Campylobacterota</taxon>
        <taxon>Epsilonproteobacteria</taxon>
        <taxon>Campylobacterales</taxon>
        <taxon>Campylobacteraceae</taxon>
        <taxon>Campylobacter</taxon>
    </lineage>
</organism>
<reference key="1">
    <citation type="journal article" date="2000" name="Nature">
        <title>The genome sequence of the food-borne pathogen Campylobacter jejuni reveals hypervariable sequences.</title>
        <authorList>
            <person name="Parkhill J."/>
            <person name="Wren B.W."/>
            <person name="Mungall K.L."/>
            <person name="Ketley J.M."/>
            <person name="Churcher C.M."/>
            <person name="Basham D."/>
            <person name="Chillingworth T."/>
            <person name="Davies R.M."/>
            <person name="Feltwell T."/>
            <person name="Holroyd S."/>
            <person name="Jagels K."/>
            <person name="Karlyshev A.V."/>
            <person name="Moule S."/>
            <person name="Pallen M.J."/>
            <person name="Penn C.W."/>
            <person name="Quail M.A."/>
            <person name="Rajandream M.A."/>
            <person name="Rutherford K.M."/>
            <person name="van Vliet A.H.M."/>
            <person name="Whitehead S."/>
            <person name="Barrell B.G."/>
        </authorList>
    </citation>
    <scope>NUCLEOTIDE SEQUENCE [LARGE SCALE GENOMIC DNA]</scope>
    <source>
        <strain>ATCC 700819 / NCTC 11168</strain>
    </source>
</reference>
<comment type="function">
    <text evidence="1">Part of the Sec protein translocase complex. Interacts with the SecYEG preprotein conducting channel. Has a central role in coupling the hydrolysis of ATP to the transfer of proteins into and across the cell membrane, serving as an ATP-driven molecular motor driving the stepwise translocation of polypeptide chains across the membrane.</text>
</comment>
<comment type="catalytic activity">
    <reaction evidence="1">
        <text>ATP + H2O + cellular proteinSide 1 = ADP + phosphate + cellular proteinSide 2.</text>
        <dbReference type="EC" id="7.4.2.8"/>
    </reaction>
</comment>
<comment type="cofactor">
    <cofactor evidence="1">
        <name>Zn(2+)</name>
        <dbReference type="ChEBI" id="CHEBI:29105"/>
    </cofactor>
    <text evidence="1">May bind 1 zinc ion per subunit.</text>
</comment>
<comment type="subunit">
    <text evidence="1">Monomer and homodimer. Part of the essential Sec protein translocation apparatus which comprises SecA, SecYEG and auxiliary proteins SecDF-YajC and YidC.</text>
</comment>
<comment type="subcellular location">
    <subcellularLocation>
        <location evidence="1">Cell inner membrane</location>
        <topology evidence="1">Peripheral membrane protein</topology>
        <orientation evidence="1">Cytoplasmic side</orientation>
    </subcellularLocation>
    <subcellularLocation>
        <location evidence="1">Cytoplasm</location>
    </subcellularLocation>
    <text evidence="1">Distribution is 50-50.</text>
</comment>
<comment type="similarity">
    <text evidence="1">Belongs to the SecA family.</text>
</comment>